<keyword id="KW-0012">Acyltransferase</keyword>
<keyword id="KW-0963">Cytoplasm</keyword>
<keyword id="KW-0408">Iron</keyword>
<keyword id="KW-0479">Metal-binding</keyword>
<keyword id="KW-1185">Reference proteome</keyword>
<keyword id="KW-0808">Transferase</keyword>
<keyword id="KW-0819">tRNA processing</keyword>
<comment type="function">
    <text evidence="1">Required for the formation of a threonylcarbamoyl group on adenosine at position 37 (t(6)A37) in tRNAs that read codons beginning with adenine. Is involved in the transfer of the threonylcarbamoyl moiety of threonylcarbamoyl-AMP (TC-AMP) to the N6 group of A37, together with TsaE and TsaB. TsaD likely plays a direct catalytic role in this reaction.</text>
</comment>
<comment type="catalytic activity">
    <reaction evidence="1">
        <text>L-threonylcarbamoyladenylate + adenosine(37) in tRNA = N(6)-L-threonylcarbamoyladenosine(37) in tRNA + AMP + H(+)</text>
        <dbReference type="Rhea" id="RHEA:37059"/>
        <dbReference type="Rhea" id="RHEA-COMP:10162"/>
        <dbReference type="Rhea" id="RHEA-COMP:10163"/>
        <dbReference type="ChEBI" id="CHEBI:15378"/>
        <dbReference type="ChEBI" id="CHEBI:73682"/>
        <dbReference type="ChEBI" id="CHEBI:74411"/>
        <dbReference type="ChEBI" id="CHEBI:74418"/>
        <dbReference type="ChEBI" id="CHEBI:456215"/>
        <dbReference type="EC" id="2.3.1.234"/>
    </reaction>
</comment>
<comment type="cofactor">
    <cofactor evidence="1">
        <name>Fe(2+)</name>
        <dbReference type="ChEBI" id="CHEBI:29033"/>
    </cofactor>
    <text evidence="1">Binds 1 Fe(2+) ion per subunit.</text>
</comment>
<comment type="subcellular location">
    <subcellularLocation>
        <location evidence="1">Cytoplasm</location>
    </subcellularLocation>
</comment>
<comment type="similarity">
    <text evidence="1">Belongs to the KAE1 / TsaD family.</text>
</comment>
<reference key="1">
    <citation type="journal article" date="2009" name="BMC Microbiol.">
        <title>The genome sequence of Geobacter metallireducens: features of metabolism, physiology and regulation common and dissimilar to Geobacter sulfurreducens.</title>
        <authorList>
            <person name="Aklujkar M."/>
            <person name="Krushkal J."/>
            <person name="DiBartolo G."/>
            <person name="Lapidus A."/>
            <person name="Land M.L."/>
            <person name="Lovley D.R."/>
        </authorList>
    </citation>
    <scope>NUCLEOTIDE SEQUENCE [LARGE SCALE GENOMIC DNA]</scope>
    <source>
        <strain>ATCC 53774 / DSM 7210 / GS-15</strain>
    </source>
</reference>
<name>TSAD_GEOMG</name>
<organism>
    <name type="scientific">Geobacter metallireducens (strain ATCC 53774 / DSM 7210 / GS-15)</name>
    <dbReference type="NCBI Taxonomy" id="269799"/>
    <lineage>
        <taxon>Bacteria</taxon>
        <taxon>Pseudomonadati</taxon>
        <taxon>Thermodesulfobacteriota</taxon>
        <taxon>Desulfuromonadia</taxon>
        <taxon>Geobacterales</taxon>
        <taxon>Geobacteraceae</taxon>
        <taxon>Geobacter</taxon>
    </lineage>
</organism>
<gene>
    <name evidence="1" type="primary">tsaD</name>
    <name type="synonym">gcp</name>
    <name type="ordered locus">Gmet_1303</name>
</gene>
<dbReference type="EC" id="2.3.1.234" evidence="1"/>
<dbReference type="EMBL" id="CP000148">
    <property type="protein sequence ID" value="ABB31539.1"/>
    <property type="molecule type" value="Genomic_DNA"/>
</dbReference>
<dbReference type="RefSeq" id="WP_004512063.1">
    <property type="nucleotide sequence ID" value="NC_007517.1"/>
</dbReference>
<dbReference type="SMR" id="Q39W35"/>
<dbReference type="STRING" id="269799.Gmet_1303"/>
<dbReference type="KEGG" id="gme:Gmet_1303"/>
<dbReference type="eggNOG" id="COG0533">
    <property type="taxonomic scope" value="Bacteria"/>
</dbReference>
<dbReference type="HOGENOM" id="CLU_023208_0_2_7"/>
<dbReference type="Proteomes" id="UP000007073">
    <property type="component" value="Chromosome"/>
</dbReference>
<dbReference type="GO" id="GO:0005737">
    <property type="term" value="C:cytoplasm"/>
    <property type="evidence" value="ECO:0007669"/>
    <property type="project" value="UniProtKB-SubCell"/>
</dbReference>
<dbReference type="GO" id="GO:0005506">
    <property type="term" value="F:iron ion binding"/>
    <property type="evidence" value="ECO:0007669"/>
    <property type="project" value="UniProtKB-UniRule"/>
</dbReference>
<dbReference type="GO" id="GO:0061711">
    <property type="term" value="F:N(6)-L-threonylcarbamoyladenine synthase activity"/>
    <property type="evidence" value="ECO:0007669"/>
    <property type="project" value="UniProtKB-EC"/>
</dbReference>
<dbReference type="GO" id="GO:0002949">
    <property type="term" value="P:tRNA threonylcarbamoyladenosine modification"/>
    <property type="evidence" value="ECO:0007669"/>
    <property type="project" value="UniProtKB-UniRule"/>
</dbReference>
<dbReference type="CDD" id="cd24133">
    <property type="entry name" value="ASKHA_NBD_TsaD_bac"/>
    <property type="match status" value="1"/>
</dbReference>
<dbReference type="FunFam" id="3.30.420.40:FF:000012">
    <property type="entry name" value="tRNA N6-adenosine threonylcarbamoyltransferase"/>
    <property type="match status" value="1"/>
</dbReference>
<dbReference type="FunFam" id="3.30.420.40:FF:000040">
    <property type="entry name" value="tRNA N6-adenosine threonylcarbamoyltransferase"/>
    <property type="match status" value="1"/>
</dbReference>
<dbReference type="Gene3D" id="3.30.420.40">
    <property type="match status" value="2"/>
</dbReference>
<dbReference type="HAMAP" id="MF_01445">
    <property type="entry name" value="TsaD"/>
    <property type="match status" value="1"/>
</dbReference>
<dbReference type="InterPro" id="IPR043129">
    <property type="entry name" value="ATPase_NBD"/>
</dbReference>
<dbReference type="InterPro" id="IPR000905">
    <property type="entry name" value="Gcp-like_dom"/>
</dbReference>
<dbReference type="InterPro" id="IPR017861">
    <property type="entry name" value="KAE1/TsaD"/>
</dbReference>
<dbReference type="InterPro" id="IPR022450">
    <property type="entry name" value="TsaD"/>
</dbReference>
<dbReference type="NCBIfam" id="TIGR00329">
    <property type="entry name" value="gcp_kae1"/>
    <property type="match status" value="1"/>
</dbReference>
<dbReference type="NCBIfam" id="TIGR03723">
    <property type="entry name" value="T6A_TsaD_YgjD"/>
    <property type="match status" value="1"/>
</dbReference>
<dbReference type="PANTHER" id="PTHR11735">
    <property type="entry name" value="TRNA N6-ADENOSINE THREONYLCARBAMOYLTRANSFERASE"/>
    <property type="match status" value="1"/>
</dbReference>
<dbReference type="PANTHER" id="PTHR11735:SF6">
    <property type="entry name" value="TRNA N6-ADENOSINE THREONYLCARBAMOYLTRANSFERASE, MITOCHONDRIAL"/>
    <property type="match status" value="1"/>
</dbReference>
<dbReference type="Pfam" id="PF00814">
    <property type="entry name" value="TsaD"/>
    <property type="match status" value="1"/>
</dbReference>
<dbReference type="PRINTS" id="PR00789">
    <property type="entry name" value="OSIALOPTASE"/>
</dbReference>
<dbReference type="SUPFAM" id="SSF53067">
    <property type="entry name" value="Actin-like ATPase domain"/>
    <property type="match status" value="2"/>
</dbReference>
<feature type="chain" id="PRO_0000303374" description="tRNA N6-adenosine threonylcarbamoyltransferase">
    <location>
        <begin position="1"/>
        <end position="341"/>
    </location>
</feature>
<feature type="binding site" evidence="1">
    <location>
        <position position="111"/>
    </location>
    <ligand>
        <name>Fe cation</name>
        <dbReference type="ChEBI" id="CHEBI:24875"/>
    </ligand>
</feature>
<feature type="binding site" evidence="1">
    <location>
        <position position="115"/>
    </location>
    <ligand>
        <name>Fe cation</name>
        <dbReference type="ChEBI" id="CHEBI:24875"/>
    </ligand>
</feature>
<feature type="binding site" evidence="1">
    <location>
        <begin position="133"/>
        <end position="137"/>
    </location>
    <ligand>
        <name>substrate</name>
    </ligand>
</feature>
<feature type="binding site" evidence="1">
    <location>
        <position position="166"/>
    </location>
    <ligand>
        <name>substrate</name>
    </ligand>
</feature>
<feature type="binding site" evidence="1">
    <location>
        <position position="179"/>
    </location>
    <ligand>
        <name>substrate</name>
    </ligand>
</feature>
<feature type="binding site" evidence="1">
    <location>
        <position position="183"/>
    </location>
    <ligand>
        <name>substrate</name>
    </ligand>
</feature>
<feature type="binding site" evidence="1">
    <location>
        <position position="273"/>
    </location>
    <ligand>
        <name>substrate</name>
    </ligand>
</feature>
<feature type="binding site" evidence="1">
    <location>
        <position position="301"/>
    </location>
    <ligand>
        <name>Fe cation</name>
        <dbReference type="ChEBI" id="CHEBI:24875"/>
    </ligand>
</feature>
<proteinExistence type="inferred from homology"/>
<protein>
    <recommendedName>
        <fullName evidence="1">tRNA N6-adenosine threonylcarbamoyltransferase</fullName>
        <ecNumber evidence="1">2.3.1.234</ecNumber>
    </recommendedName>
    <alternativeName>
        <fullName evidence="1">N6-L-threonylcarbamoyladenine synthase</fullName>
        <shortName evidence="1">t(6)A synthase</shortName>
    </alternativeName>
    <alternativeName>
        <fullName evidence="1">t(6)A37 threonylcarbamoyladenosine biosynthesis protein TsaD</fullName>
    </alternativeName>
    <alternativeName>
        <fullName evidence="1">tRNA threonylcarbamoyladenosine biosynthesis protein TsaD</fullName>
    </alternativeName>
</protein>
<accession>Q39W35</accession>
<evidence type="ECO:0000255" key="1">
    <source>
        <dbReference type="HAMAP-Rule" id="MF_01445"/>
    </source>
</evidence>
<sequence length="341" mass="35882">MLILTIETSCDETAAAVVRDGRTVLSSIVATQVKDHAVYGGVVPEIASRKHLESIPVVIDEALRTASVSLDAIEGVAVTQGPGLAGALLVGTAVAKAIAFARRLPIVGVNHIEGHLSAIFLEREVAFPFVALAVSGGHTHLYRVDGIGRYTTLGQTRDDAAGEAFDKVAKLLGLPYPGGVEIDRLAAEGDPASISFPRPLLHDGSFNFSFSGLKTAVLNHVRKNPVQEDGQQLRDLCASFQRAACDVLVTKTLLAAETEGIGRVVVAGGVACNSALRRDMAREAADRGIELAIPSPSLCSDNAAMLAVPGDFYLSRGISDGLSLDALVNWPLDTIRTRLES</sequence>